<organism>
    <name type="scientific">Zaire ebolavirus (strain Eckron-76)</name>
    <name type="common">ZEBOV</name>
    <name type="synonym">Zaire Ebola virus</name>
    <dbReference type="NCBI Taxonomy" id="129000"/>
    <lineage>
        <taxon>Viruses</taxon>
        <taxon>Riboviria</taxon>
        <taxon>Orthornavirae</taxon>
        <taxon>Negarnaviricota</taxon>
        <taxon>Haploviricotina</taxon>
        <taxon>Monjiviricetes</taxon>
        <taxon>Mononegavirales</taxon>
        <taxon>Filoviridae</taxon>
        <taxon>Orthoebolavirus</taxon>
        <taxon>Orthoebolavirus zairense</taxon>
        <taxon>Zaire ebolavirus</taxon>
    </lineage>
</organism>
<gene>
    <name type="primary">GP</name>
</gene>
<sequence>MGVTGILQLPRDRFKRTSFFLWVIILFQRTFSIPLGVIHNSTLQVNDVDKLVCRDKLSSTNQLRSVGLNLEGNGVATDVPSATKRWGFRSGVPPKVVNYEAGEWAENCYNLEIKKPDGSECLPAAPDGIRGFPRCRYVHKVSGTGPCAGDFAFHKEGAFFLYDRLASTVIYRGTTFAEGVVAFLILPQAKKDFFSSHPLREPVNATEDPSSGYYSTTIRYQATGFGTNETEYLFEVDNLTYVQLESRFTPQFLLQLNETIYTSGKRSNTTGKLIWKVNPEIDTTIGEWAFWETKKTSLEKFAVKSCLSQLYQTEPKTSVVRVRRELLPTQGPTQQLKTTKSWLQKIPLQWFKCTVKEGKLQCRI</sequence>
<reference key="1">
    <citation type="journal article" date="1997" name="Virology">
        <title>Emergence of subtype Zaire Ebola virus in Gabon.</title>
        <authorList>
            <person name="Volchkov V."/>
            <person name="Volchkova V."/>
            <person name="Eckel C."/>
            <person name="Klenk H.-D."/>
            <person name="Bouloy M."/>
            <person name="Leguenno B."/>
            <person name="Feldmann H."/>
        </authorList>
    </citation>
    <scope>NUCLEOTIDE SEQUENCE [GENOMIC RNA]</scope>
</reference>
<accession>P87670</accession>
<protein>
    <recommendedName>
        <fullName>Pre-small/secreted glycoprotein</fullName>
        <shortName>pre-sGP</shortName>
    </recommendedName>
    <component>
        <recommendedName>
            <fullName>Small/secreted glycoprotein</fullName>
            <shortName>sGP</shortName>
        </recommendedName>
    </component>
    <component>
        <recommendedName>
            <fullName>Delta-peptide</fullName>
        </recommendedName>
    </component>
</protein>
<feature type="signal peptide" evidence="3">
    <location>
        <begin position="1"/>
        <end position="32"/>
    </location>
</feature>
<feature type="chain" id="PRO_0000037488" description="Pre-small/secreted glycoprotein" evidence="1">
    <location>
        <begin position="33"/>
        <end position="364"/>
    </location>
</feature>
<feature type="chain" id="PRO_0000037489" description="Small/secreted glycoprotein" evidence="1">
    <location>
        <begin position="33"/>
        <end position="324"/>
    </location>
</feature>
<feature type="chain" id="PRO_0000037490" description="Delta-peptide" evidence="1">
    <location>
        <begin position="325"/>
        <end position="364"/>
    </location>
</feature>
<feature type="site" description="Cleavage; by host furin" evidence="1">
    <location>
        <begin position="324"/>
        <end position="325"/>
    </location>
</feature>
<feature type="glycosylation site" description="N-linked (GlcNAc...) asparagine; by host" evidence="3">
    <location>
        <position position="40"/>
    </location>
</feature>
<feature type="glycosylation site" description="N-linked (GlcNAc...) asparagine; by host" evidence="3">
    <location>
        <position position="204"/>
    </location>
</feature>
<feature type="glycosylation site" description="N-linked (GlcNAc...) asparagine; by host" evidence="3">
    <location>
        <position position="228"/>
    </location>
</feature>
<feature type="glycosylation site" description="N-linked (GlcNAc...) asparagine; by host" evidence="3">
    <location>
        <position position="238"/>
    </location>
</feature>
<feature type="glycosylation site" description="N-linked (GlcNAc...) asparagine; by host" evidence="3">
    <location>
        <position position="257"/>
    </location>
</feature>
<feature type="glycosylation site" description="N-linked (GlcNAc...) asparagine; by host" evidence="3">
    <location>
        <position position="268"/>
    </location>
</feature>
<feature type="disulfide bond" description="Interchain" evidence="1">
    <location>
        <position position="53"/>
    </location>
</feature>
<feature type="disulfide bond" evidence="1">
    <location>
        <begin position="108"/>
        <end position="135"/>
    </location>
</feature>
<feature type="disulfide bond" evidence="1">
    <location>
        <begin position="121"/>
        <end position="147"/>
    </location>
</feature>
<feature type="disulfide bond" description="Interchain" evidence="1">
    <location>
        <position position="306"/>
    </location>
</feature>
<proteinExistence type="inferred from homology"/>
<name>VSGP_EBOEC</name>
<comment type="function">
    <molecule>Small/secreted glycoprotein</molecule>
    <text evidence="2">Seems to possess an anti-inflammatory activity as it can reverse the barrier-decreasing effects of TNF alpha. Might therefore contribute to the lack of inflammatory reaction seen during infection in spite the of extensive necrosis and massive virus production. Does not seem to be involved in activation of primary macrophages. Does not seem to interact specifically with neutrophils.</text>
</comment>
<comment type="function">
    <molecule>Delta-peptide</molecule>
    <text evidence="2">Viroporin that permeabilizes mammalian cell plasma membranes. It acts by altering permeation of ionic compounds and small molecules. This activity may lead to viral enterotoxic activity.</text>
</comment>
<comment type="subunit">
    <molecule>Small/secreted glycoprotein</molecule>
    <text evidence="2">Homodimer; disulfide-linked (By similarity). The homodimers are linked by two disulfide bonds in a parallel orientation (By similarity).</text>
</comment>
<comment type="subunit">
    <molecule>Delta-peptide</molecule>
    <text>Monomer.</text>
</comment>
<comment type="subcellular location">
    <molecule>Small/secreted glycoprotein</molecule>
    <subcellularLocation>
        <location evidence="2">Secreted</location>
    </subcellularLocation>
</comment>
<comment type="subcellular location">
    <molecule>Delta-peptide</molecule>
    <subcellularLocation>
        <location evidence="2">Secreted</location>
    </subcellularLocation>
</comment>
<comment type="PTM">
    <molecule>Pre-small/secreted glycoprotein</molecule>
    <text evidence="2">This precursor is processed into mature sGP and delta-peptide by host furin or furin-like proteases. The cleavage site corresponds to the furin optimal cleavage sequence [KR]-X-[KR]-R.</text>
</comment>
<comment type="PTM">
    <molecule>Small/secreted glycoprotein</molecule>
    <text evidence="2">N-glycosylated.</text>
</comment>
<comment type="PTM">
    <molecule>Delta-peptide</molecule>
    <text evidence="2">O-glycosylated.</text>
</comment>
<comment type="RNA editing">
    <location>
        <position position="295" evidence="1"/>
    </location>
    <text evidence="1">Partially edited. RNA editing at this position consists of an insertion of one adenine nucleotide. The sequence displayed here is the small secreted glycoprotein, derived from the unedited RNA. The edited RNA gives rise to the full-length transmembrane glycoprotein (AC P87671) (By similarity).</text>
</comment>
<comment type="similarity">
    <text evidence="4">Belongs to the filoviruses glycoprotein family.</text>
</comment>
<dbReference type="EMBL" id="U81161">
    <property type="protein sequence ID" value="AAC57993.1"/>
    <property type="molecule type" value="Genomic_RNA"/>
</dbReference>
<dbReference type="SMR" id="P87670"/>
<dbReference type="GlyCosmos" id="P87670">
    <property type="glycosylation" value="6 sites, No reported glycans"/>
</dbReference>
<dbReference type="GO" id="GO:0005576">
    <property type="term" value="C:extracellular region"/>
    <property type="evidence" value="ECO:0007669"/>
    <property type="project" value="UniProtKB-SubCell"/>
</dbReference>
<dbReference type="GO" id="GO:0033644">
    <property type="term" value="C:host cell membrane"/>
    <property type="evidence" value="ECO:0007669"/>
    <property type="project" value="UniProtKB-KW"/>
</dbReference>
<dbReference type="GO" id="GO:0015267">
    <property type="term" value="F:channel activity"/>
    <property type="evidence" value="ECO:0007669"/>
    <property type="project" value="UniProtKB-KW"/>
</dbReference>
<dbReference type="GO" id="GO:0034220">
    <property type="term" value="P:monoatomic ion transmembrane transport"/>
    <property type="evidence" value="ECO:0007669"/>
    <property type="project" value="UniProtKB-KW"/>
</dbReference>
<dbReference type="InterPro" id="IPR014625">
    <property type="entry name" value="GPC_FiloV"/>
</dbReference>
<dbReference type="InterPro" id="IPR002561">
    <property type="entry name" value="GPC_filovir-type_extra_dom"/>
</dbReference>
<dbReference type="Pfam" id="PF01611">
    <property type="entry name" value="Filo_glycop"/>
    <property type="match status" value="1"/>
</dbReference>
<dbReference type="PIRSF" id="PIRSF036874">
    <property type="entry name" value="GPC_FiloV"/>
    <property type="match status" value="1"/>
</dbReference>
<organismHost>
    <name type="scientific">Epomops franqueti</name>
    <name type="common">Franquet's epauletted fruit bat</name>
    <name type="synonym">Epomophorus franqueti</name>
    <dbReference type="NCBI Taxonomy" id="77231"/>
</organismHost>
<organismHost>
    <name type="scientific">Homo sapiens</name>
    <name type="common">Human</name>
    <dbReference type="NCBI Taxonomy" id="9606"/>
</organismHost>
<organismHost>
    <name type="scientific">Myonycteris torquata</name>
    <name type="common">Little collared fruit bat</name>
    <dbReference type="NCBI Taxonomy" id="77243"/>
</organismHost>
<evidence type="ECO:0000250" key="1"/>
<evidence type="ECO:0000250" key="2">
    <source>
        <dbReference type="UniProtKB" id="P60170"/>
    </source>
</evidence>
<evidence type="ECO:0000255" key="3"/>
<evidence type="ECO:0000305" key="4"/>
<keyword id="KW-0165">Cleavage on pair of basic residues</keyword>
<keyword id="KW-1015">Disulfide bond</keyword>
<keyword id="KW-0325">Glycoprotein</keyword>
<keyword id="KW-0407">Ion channel</keyword>
<keyword id="KW-0406">Ion transport</keyword>
<keyword id="KW-0691">RNA editing</keyword>
<keyword id="KW-0964">Secreted</keyword>
<keyword id="KW-0732">Signal</keyword>
<keyword id="KW-0813">Transport</keyword>
<keyword id="KW-1182">Viral ion channel</keyword>